<feature type="chain" id="PRO_0000140641" description="Chorismate synthase">
    <location>
        <begin position="1"/>
        <end position="388"/>
    </location>
</feature>
<feature type="binding site" evidence="1">
    <location>
        <position position="39"/>
    </location>
    <ligand>
        <name>NADP(+)</name>
        <dbReference type="ChEBI" id="CHEBI:58349"/>
    </ligand>
</feature>
<feature type="binding site" evidence="1">
    <location>
        <position position="45"/>
    </location>
    <ligand>
        <name>NADP(+)</name>
        <dbReference type="ChEBI" id="CHEBI:58349"/>
    </ligand>
</feature>
<feature type="binding site" evidence="1">
    <location>
        <begin position="132"/>
        <end position="134"/>
    </location>
    <ligand>
        <name>FMN</name>
        <dbReference type="ChEBI" id="CHEBI:58210"/>
    </ligand>
</feature>
<feature type="binding site" evidence="1">
    <location>
        <begin position="251"/>
        <end position="252"/>
    </location>
    <ligand>
        <name>FMN</name>
        <dbReference type="ChEBI" id="CHEBI:58210"/>
    </ligand>
</feature>
<feature type="binding site" evidence="1">
    <location>
        <position position="296"/>
    </location>
    <ligand>
        <name>FMN</name>
        <dbReference type="ChEBI" id="CHEBI:58210"/>
    </ligand>
</feature>
<feature type="binding site" evidence="1">
    <location>
        <begin position="311"/>
        <end position="315"/>
    </location>
    <ligand>
        <name>FMN</name>
        <dbReference type="ChEBI" id="CHEBI:58210"/>
    </ligand>
</feature>
<feature type="binding site" evidence="1">
    <location>
        <position position="337"/>
    </location>
    <ligand>
        <name>FMN</name>
        <dbReference type="ChEBI" id="CHEBI:58210"/>
    </ligand>
</feature>
<dbReference type="EC" id="4.2.3.5" evidence="1"/>
<dbReference type="EMBL" id="CP000046">
    <property type="protein sequence ID" value="AAW36701.1"/>
    <property type="molecule type" value="Genomic_DNA"/>
</dbReference>
<dbReference type="RefSeq" id="WP_001269929.1">
    <property type="nucleotide sequence ID" value="NZ_JBGOFO010000003.1"/>
</dbReference>
<dbReference type="SMR" id="Q5HFV7"/>
<dbReference type="KEGG" id="sac:SACOL1506"/>
<dbReference type="HOGENOM" id="CLU_034547_2_0_9"/>
<dbReference type="UniPathway" id="UPA00053">
    <property type="reaction ID" value="UER00090"/>
</dbReference>
<dbReference type="Proteomes" id="UP000000530">
    <property type="component" value="Chromosome"/>
</dbReference>
<dbReference type="GO" id="GO:0005829">
    <property type="term" value="C:cytosol"/>
    <property type="evidence" value="ECO:0007669"/>
    <property type="project" value="TreeGrafter"/>
</dbReference>
<dbReference type="GO" id="GO:0004107">
    <property type="term" value="F:chorismate synthase activity"/>
    <property type="evidence" value="ECO:0007669"/>
    <property type="project" value="UniProtKB-UniRule"/>
</dbReference>
<dbReference type="GO" id="GO:0010181">
    <property type="term" value="F:FMN binding"/>
    <property type="evidence" value="ECO:0007669"/>
    <property type="project" value="TreeGrafter"/>
</dbReference>
<dbReference type="GO" id="GO:0008652">
    <property type="term" value="P:amino acid biosynthetic process"/>
    <property type="evidence" value="ECO:0007669"/>
    <property type="project" value="UniProtKB-KW"/>
</dbReference>
<dbReference type="GO" id="GO:0009073">
    <property type="term" value="P:aromatic amino acid family biosynthetic process"/>
    <property type="evidence" value="ECO:0007669"/>
    <property type="project" value="UniProtKB-KW"/>
</dbReference>
<dbReference type="GO" id="GO:0009423">
    <property type="term" value="P:chorismate biosynthetic process"/>
    <property type="evidence" value="ECO:0007669"/>
    <property type="project" value="UniProtKB-UniRule"/>
</dbReference>
<dbReference type="CDD" id="cd07304">
    <property type="entry name" value="Chorismate_synthase"/>
    <property type="match status" value="1"/>
</dbReference>
<dbReference type="FunFam" id="3.60.150.10:FF:000002">
    <property type="entry name" value="Chorismate synthase"/>
    <property type="match status" value="1"/>
</dbReference>
<dbReference type="Gene3D" id="3.60.150.10">
    <property type="entry name" value="Chorismate synthase AroC"/>
    <property type="match status" value="1"/>
</dbReference>
<dbReference type="HAMAP" id="MF_00300">
    <property type="entry name" value="Chorismate_synth"/>
    <property type="match status" value="1"/>
</dbReference>
<dbReference type="InterPro" id="IPR000453">
    <property type="entry name" value="Chorismate_synth"/>
</dbReference>
<dbReference type="InterPro" id="IPR035904">
    <property type="entry name" value="Chorismate_synth_AroC_sf"/>
</dbReference>
<dbReference type="InterPro" id="IPR020541">
    <property type="entry name" value="Chorismate_synthase_CS"/>
</dbReference>
<dbReference type="NCBIfam" id="TIGR00033">
    <property type="entry name" value="aroC"/>
    <property type="match status" value="1"/>
</dbReference>
<dbReference type="NCBIfam" id="NF003793">
    <property type="entry name" value="PRK05382.1"/>
    <property type="match status" value="1"/>
</dbReference>
<dbReference type="PANTHER" id="PTHR21085">
    <property type="entry name" value="CHORISMATE SYNTHASE"/>
    <property type="match status" value="1"/>
</dbReference>
<dbReference type="PANTHER" id="PTHR21085:SF0">
    <property type="entry name" value="CHORISMATE SYNTHASE"/>
    <property type="match status" value="1"/>
</dbReference>
<dbReference type="Pfam" id="PF01264">
    <property type="entry name" value="Chorismate_synt"/>
    <property type="match status" value="1"/>
</dbReference>
<dbReference type="PIRSF" id="PIRSF001456">
    <property type="entry name" value="Chorismate_synth"/>
    <property type="match status" value="1"/>
</dbReference>
<dbReference type="SUPFAM" id="SSF103263">
    <property type="entry name" value="Chorismate synthase, AroC"/>
    <property type="match status" value="1"/>
</dbReference>
<dbReference type="PROSITE" id="PS00787">
    <property type="entry name" value="CHORISMATE_SYNTHASE_1"/>
    <property type="match status" value="1"/>
</dbReference>
<dbReference type="PROSITE" id="PS00788">
    <property type="entry name" value="CHORISMATE_SYNTHASE_2"/>
    <property type="match status" value="1"/>
</dbReference>
<dbReference type="PROSITE" id="PS00789">
    <property type="entry name" value="CHORISMATE_SYNTHASE_3"/>
    <property type="match status" value="1"/>
</dbReference>
<accession>Q5HFV7</accession>
<keyword id="KW-0028">Amino-acid biosynthesis</keyword>
<keyword id="KW-0057">Aromatic amino acid biosynthesis</keyword>
<keyword id="KW-0274">FAD</keyword>
<keyword id="KW-0285">Flavoprotein</keyword>
<keyword id="KW-0288">FMN</keyword>
<keyword id="KW-0456">Lyase</keyword>
<keyword id="KW-0521">NADP</keyword>
<organism>
    <name type="scientific">Staphylococcus aureus (strain COL)</name>
    <dbReference type="NCBI Taxonomy" id="93062"/>
    <lineage>
        <taxon>Bacteria</taxon>
        <taxon>Bacillati</taxon>
        <taxon>Bacillota</taxon>
        <taxon>Bacilli</taxon>
        <taxon>Bacillales</taxon>
        <taxon>Staphylococcaceae</taxon>
        <taxon>Staphylococcus</taxon>
    </lineage>
</organism>
<sequence>MRYLTSGESHGPQLTVIVEGVPANIEIKVEDINKEMFKRQGGYGRGRRMQIEKDTVEIVSGVRNGYTLGSPITMVVTNDDFTHWRKIMGAAPISEEERENMKRTITKPRPGHADLVGGMKYNHRDLRNVLERSSARETAARVAVGALCKVLLQQLDIDIYSRVVEIGGIKDKDFYDSETFKANLDRNDVRVIDDSIAQAMRDKIDEAKNEGDSIGGVVQVVVENMPVGVGSYVHYDRKLDGKIAQGVVSINAFKGVSFGEGFKAAEKPGSEIQDEILYNSEIGYYRGSNHLGGLEGGMSNGMPIIVNGVMKPIPTLYKPLNSVDINTKEDFKATIERSDSCAVPAASIVCEHVVAFEIAKALLEEFQSNHIEQLKQQIIERRQLNIEF</sequence>
<proteinExistence type="inferred from homology"/>
<comment type="function">
    <text evidence="1">Catalyzes the anti-1,4-elimination of the C-3 phosphate and the C-6 proR hydrogen from 5-enolpyruvylshikimate-3-phosphate (EPSP) to yield chorismate, which is the branch point compound that serves as the starting substrate for the three terminal pathways of aromatic amino acid biosynthesis. This reaction introduces a second double bond into the aromatic ring system.</text>
</comment>
<comment type="catalytic activity">
    <reaction evidence="1">
        <text>5-O-(1-carboxyvinyl)-3-phosphoshikimate = chorismate + phosphate</text>
        <dbReference type="Rhea" id="RHEA:21020"/>
        <dbReference type="ChEBI" id="CHEBI:29748"/>
        <dbReference type="ChEBI" id="CHEBI:43474"/>
        <dbReference type="ChEBI" id="CHEBI:57701"/>
        <dbReference type="EC" id="4.2.3.5"/>
    </reaction>
</comment>
<comment type="cofactor">
    <cofactor evidence="1">
        <name>FMNH2</name>
        <dbReference type="ChEBI" id="CHEBI:57618"/>
    </cofactor>
    <text evidence="1">Reduced FMN (FMNH(2)).</text>
</comment>
<comment type="pathway">
    <text evidence="1">Metabolic intermediate biosynthesis; chorismate biosynthesis; chorismate from D-erythrose 4-phosphate and phosphoenolpyruvate: step 7/7.</text>
</comment>
<comment type="subunit">
    <text evidence="1">Homotetramer.</text>
</comment>
<comment type="similarity">
    <text evidence="1">Belongs to the chorismate synthase family.</text>
</comment>
<reference key="1">
    <citation type="journal article" date="2005" name="J. Bacteriol.">
        <title>Insights on evolution of virulence and resistance from the complete genome analysis of an early methicillin-resistant Staphylococcus aureus strain and a biofilm-producing methicillin-resistant Staphylococcus epidermidis strain.</title>
        <authorList>
            <person name="Gill S.R."/>
            <person name="Fouts D.E."/>
            <person name="Archer G.L."/>
            <person name="Mongodin E.F."/>
            <person name="DeBoy R.T."/>
            <person name="Ravel J."/>
            <person name="Paulsen I.T."/>
            <person name="Kolonay J.F."/>
            <person name="Brinkac L.M."/>
            <person name="Beanan M.J."/>
            <person name="Dodson R.J."/>
            <person name="Daugherty S.C."/>
            <person name="Madupu R."/>
            <person name="Angiuoli S.V."/>
            <person name="Durkin A.S."/>
            <person name="Haft D.H."/>
            <person name="Vamathevan J.J."/>
            <person name="Khouri H."/>
            <person name="Utterback T.R."/>
            <person name="Lee C."/>
            <person name="Dimitrov G."/>
            <person name="Jiang L."/>
            <person name="Qin H."/>
            <person name="Weidman J."/>
            <person name="Tran K."/>
            <person name="Kang K.H."/>
            <person name="Hance I.R."/>
            <person name="Nelson K.E."/>
            <person name="Fraser C.M."/>
        </authorList>
    </citation>
    <scope>NUCLEOTIDE SEQUENCE [LARGE SCALE GENOMIC DNA]</scope>
    <source>
        <strain>COL</strain>
    </source>
</reference>
<gene>
    <name evidence="1" type="primary">aroC</name>
    <name type="ordered locus">SACOL1506</name>
</gene>
<protein>
    <recommendedName>
        <fullName evidence="1">Chorismate synthase</fullName>
        <shortName evidence="1">CS</shortName>
        <ecNumber evidence="1">4.2.3.5</ecNumber>
    </recommendedName>
    <alternativeName>
        <fullName evidence="1">5-enolpyruvylshikimate-3-phosphate phospholyase</fullName>
    </alternativeName>
</protein>
<name>AROC_STAAC</name>
<evidence type="ECO:0000255" key="1">
    <source>
        <dbReference type="HAMAP-Rule" id="MF_00300"/>
    </source>
</evidence>